<sequence>MSQVTMRDMLKAGVHFGHQTRYWNPKMDKYIFGARNKIHIINLEKTLPMFNDALRFVEKLAAGKNKILFVGTKRSAGKIVREEAARCGSPYVDHRWLGGMLTNYKTIRASIKRLRELEAQSQDGTFEKLTKKEALMRTRDLEKLERSLGGIKDMGGLPDAMFVIDVDHERIAISEANKLGIPVIGVVDTNSSPEGVDYIIPGNDDAIRAVQLYLGSMADAVLRGRQNGAGGADEFVEEVASEAAQG</sequence>
<reference key="1">
    <citation type="journal article" date="2008" name="Proc. Natl. Acad. Sci. U.S.A.">
        <title>Nitrogen fixation island and rhizosphere competence traits in the genome of root-associated Pseudomonas stutzeri A1501.</title>
        <authorList>
            <person name="Yan Y."/>
            <person name="Yang J."/>
            <person name="Dou Y."/>
            <person name="Chen M."/>
            <person name="Ping S."/>
            <person name="Peng J."/>
            <person name="Lu W."/>
            <person name="Zhang W."/>
            <person name="Yao Z."/>
            <person name="Li H."/>
            <person name="Liu W."/>
            <person name="He S."/>
            <person name="Geng L."/>
            <person name="Zhang X."/>
            <person name="Yang F."/>
            <person name="Yu H."/>
            <person name="Zhan Y."/>
            <person name="Li D."/>
            <person name="Lin Z."/>
            <person name="Wang Y."/>
            <person name="Elmerich C."/>
            <person name="Lin M."/>
            <person name="Jin Q."/>
        </authorList>
    </citation>
    <scope>NUCLEOTIDE SEQUENCE [LARGE SCALE GENOMIC DNA]</scope>
    <source>
        <strain>A1501</strain>
    </source>
</reference>
<feature type="chain" id="PRO_1000004038" description="Small ribosomal subunit protein uS2">
    <location>
        <begin position="1"/>
        <end position="246"/>
    </location>
</feature>
<proteinExistence type="inferred from homology"/>
<dbReference type="EMBL" id="CP000304">
    <property type="protein sequence ID" value="ABP79222.1"/>
    <property type="molecule type" value="Genomic_DNA"/>
</dbReference>
<dbReference type="RefSeq" id="WP_011912700.1">
    <property type="nucleotide sequence ID" value="NC_009434.1"/>
</dbReference>
<dbReference type="SMR" id="A4VJS1"/>
<dbReference type="GeneID" id="66820683"/>
<dbReference type="KEGG" id="psa:PST_1537"/>
<dbReference type="eggNOG" id="COG0052">
    <property type="taxonomic scope" value="Bacteria"/>
</dbReference>
<dbReference type="HOGENOM" id="CLU_040318_1_2_6"/>
<dbReference type="Proteomes" id="UP000000233">
    <property type="component" value="Chromosome"/>
</dbReference>
<dbReference type="GO" id="GO:0022627">
    <property type="term" value="C:cytosolic small ribosomal subunit"/>
    <property type="evidence" value="ECO:0007669"/>
    <property type="project" value="TreeGrafter"/>
</dbReference>
<dbReference type="GO" id="GO:0003735">
    <property type="term" value="F:structural constituent of ribosome"/>
    <property type="evidence" value="ECO:0007669"/>
    <property type="project" value="InterPro"/>
</dbReference>
<dbReference type="GO" id="GO:0006412">
    <property type="term" value="P:translation"/>
    <property type="evidence" value="ECO:0007669"/>
    <property type="project" value="UniProtKB-UniRule"/>
</dbReference>
<dbReference type="CDD" id="cd01425">
    <property type="entry name" value="RPS2"/>
    <property type="match status" value="1"/>
</dbReference>
<dbReference type="FunFam" id="1.10.287.610:FF:000001">
    <property type="entry name" value="30S ribosomal protein S2"/>
    <property type="match status" value="1"/>
</dbReference>
<dbReference type="Gene3D" id="3.40.50.10490">
    <property type="entry name" value="Glucose-6-phosphate isomerase like protein, domain 1"/>
    <property type="match status" value="1"/>
</dbReference>
<dbReference type="Gene3D" id="1.10.287.610">
    <property type="entry name" value="Helix hairpin bin"/>
    <property type="match status" value="1"/>
</dbReference>
<dbReference type="HAMAP" id="MF_00291_B">
    <property type="entry name" value="Ribosomal_uS2_B"/>
    <property type="match status" value="1"/>
</dbReference>
<dbReference type="InterPro" id="IPR001865">
    <property type="entry name" value="Ribosomal_uS2"/>
</dbReference>
<dbReference type="InterPro" id="IPR005706">
    <property type="entry name" value="Ribosomal_uS2_bac/mit/plastid"/>
</dbReference>
<dbReference type="InterPro" id="IPR018130">
    <property type="entry name" value="Ribosomal_uS2_CS"/>
</dbReference>
<dbReference type="InterPro" id="IPR023591">
    <property type="entry name" value="Ribosomal_uS2_flav_dom_sf"/>
</dbReference>
<dbReference type="NCBIfam" id="TIGR01011">
    <property type="entry name" value="rpsB_bact"/>
    <property type="match status" value="1"/>
</dbReference>
<dbReference type="PANTHER" id="PTHR12534">
    <property type="entry name" value="30S RIBOSOMAL PROTEIN S2 PROKARYOTIC AND ORGANELLAR"/>
    <property type="match status" value="1"/>
</dbReference>
<dbReference type="PANTHER" id="PTHR12534:SF0">
    <property type="entry name" value="SMALL RIBOSOMAL SUBUNIT PROTEIN US2M"/>
    <property type="match status" value="1"/>
</dbReference>
<dbReference type="Pfam" id="PF00318">
    <property type="entry name" value="Ribosomal_S2"/>
    <property type="match status" value="1"/>
</dbReference>
<dbReference type="PRINTS" id="PR00395">
    <property type="entry name" value="RIBOSOMALS2"/>
</dbReference>
<dbReference type="SUPFAM" id="SSF52313">
    <property type="entry name" value="Ribosomal protein S2"/>
    <property type="match status" value="1"/>
</dbReference>
<dbReference type="PROSITE" id="PS00962">
    <property type="entry name" value="RIBOSOMAL_S2_1"/>
    <property type="match status" value="1"/>
</dbReference>
<dbReference type="PROSITE" id="PS00963">
    <property type="entry name" value="RIBOSOMAL_S2_2"/>
    <property type="match status" value="1"/>
</dbReference>
<gene>
    <name evidence="1" type="primary">rpsB</name>
    <name type="ordered locus">PST_1537</name>
</gene>
<organism>
    <name type="scientific">Stutzerimonas stutzeri (strain A1501)</name>
    <name type="common">Pseudomonas stutzeri</name>
    <dbReference type="NCBI Taxonomy" id="379731"/>
    <lineage>
        <taxon>Bacteria</taxon>
        <taxon>Pseudomonadati</taxon>
        <taxon>Pseudomonadota</taxon>
        <taxon>Gammaproteobacteria</taxon>
        <taxon>Pseudomonadales</taxon>
        <taxon>Pseudomonadaceae</taxon>
        <taxon>Stutzerimonas</taxon>
    </lineage>
</organism>
<name>RS2_STUS1</name>
<keyword id="KW-1185">Reference proteome</keyword>
<keyword id="KW-0687">Ribonucleoprotein</keyword>
<keyword id="KW-0689">Ribosomal protein</keyword>
<evidence type="ECO:0000255" key="1">
    <source>
        <dbReference type="HAMAP-Rule" id="MF_00291"/>
    </source>
</evidence>
<evidence type="ECO:0000305" key="2"/>
<comment type="similarity">
    <text evidence="1">Belongs to the universal ribosomal protein uS2 family.</text>
</comment>
<accession>A4VJS1</accession>
<protein>
    <recommendedName>
        <fullName evidence="1">Small ribosomal subunit protein uS2</fullName>
    </recommendedName>
    <alternativeName>
        <fullName evidence="2">30S ribosomal protein S2</fullName>
    </alternativeName>
</protein>